<organismHost>
    <name type="scientific">Acanthamoeba polyphaga</name>
    <name type="common">Amoeba</name>
    <dbReference type="NCBI Taxonomy" id="5757"/>
</organismHost>
<name>YL091_MIMIV</name>
<protein>
    <recommendedName>
        <fullName>Putative ankyrin repeat protein L91</fullName>
    </recommendedName>
</protein>
<dbReference type="EMBL" id="AY653733">
    <property type="protein sequence ID" value="AAV50366.1"/>
    <property type="molecule type" value="Genomic_DNA"/>
</dbReference>
<dbReference type="SMR" id="Q5UPG7"/>
<dbReference type="Proteomes" id="UP000001134">
    <property type="component" value="Genome"/>
</dbReference>
<dbReference type="Gene3D" id="1.25.40.20">
    <property type="entry name" value="Ankyrin repeat-containing domain"/>
    <property type="match status" value="7"/>
</dbReference>
<dbReference type="InterPro" id="IPR002110">
    <property type="entry name" value="Ankyrin_rpt"/>
</dbReference>
<dbReference type="InterPro" id="IPR036770">
    <property type="entry name" value="Ankyrin_rpt-contain_sf"/>
</dbReference>
<dbReference type="PANTHER" id="PTHR24198">
    <property type="entry name" value="ANKYRIN REPEAT AND PROTEIN KINASE DOMAIN-CONTAINING PROTEIN"/>
    <property type="match status" value="1"/>
</dbReference>
<dbReference type="PANTHER" id="PTHR24198:SF165">
    <property type="entry name" value="ANKYRIN REPEAT-CONTAINING PROTEIN-RELATED"/>
    <property type="match status" value="1"/>
</dbReference>
<dbReference type="Pfam" id="PF12796">
    <property type="entry name" value="Ank_2"/>
    <property type="match status" value="4"/>
</dbReference>
<dbReference type="PRINTS" id="PR01415">
    <property type="entry name" value="ANKYRIN"/>
</dbReference>
<dbReference type="SMART" id="SM00248">
    <property type="entry name" value="ANK"/>
    <property type="match status" value="12"/>
</dbReference>
<dbReference type="SUPFAM" id="SSF48403">
    <property type="entry name" value="Ankyrin repeat"/>
    <property type="match status" value="2"/>
</dbReference>
<dbReference type="PROSITE" id="PS50297">
    <property type="entry name" value="ANK_REP_REGION"/>
    <property type="match status" value="1"/>
</dbReference>
<dbReference type="PROSITE" id="PS50088">
    <property type="entry name" value="ANK_REPEAT"/>
    <property type="match status" value="5"/>
</dbReference>
<organism>
    <name type="scientific">Acanthamoeba polyphaga mimivirus</name>
    <name type="common">APMV</name>
    <dbReference type="NCBI Taxonomy" id="212035"/>
    <lineage>
        <taxon>Viruses</taxon>
        <taxon>Varidnaviria</taxon>
        <taxon>Bamfordvirae</taxon>
        <taxon>Nucleocytoviricota</taxon>
        <taxon>Megaviricetes</taxon>
        <taxon>Imitervirales</taxon>
        <taxon>Mimiviridae</taxon>
        <taxon>Megamimivirinae</taxon>
        <taxon>Mimivirus</taxon>
        <taxon>Mimivirus bradfordmassiliense</taxon>
    </lineage>
</organism>
<proteinExistence type="predicted"/>
<feature type="chain" id="PRO_0000067150" description="Putative ankyrin repeat protein L91">
    <location>
        <begin position="1"/>
        <end position="642"/>
    </location>
</feature>
<feature type="repeat" description="ANK 1">
    <location>
        <begin position="42"/>
        <end position="76"/>
    </location>
</feature>
<feature type="repeat" description="ANK 2">
    <location>
        <begin position="85"/>
        <end position="118"/>
    </location>
</feature>
<feature type="repeat" description="ANK 3">
    <location>
        <begin position="153"/>
        <end position="186"/>
    </location>
</feature>
<feature type="repeat" description="ANK 4">
    <location>
        <begin position="190"/>
        <end position="224"/>
    </location>
</feature>
<feature type="repeat" description="ANK 5">
    <location>
        <begin position="227"/>
        <end position="256"/>
    </location>
</feature>
<feature type="repeat" description="ANK 6">
    <location>
        <begin position="260"/>
        <end position="288"/>
    </location>
</feature>
<feature type="repeat" description="ANK 7">
    <location>
        <begin position="292"/>
        <end position="322"/>
    </location>
</feature>
<feature type="repeat" description="ANK 8">
    <location>
        <begin position="326"/>
        <end position="360"/>
    </location>
</feature>
<feature type="repeat" description="ANK 9">
    <location>
        <begin position="365"/>
        <end position="397"/>
    </location>
</feature>
<feature type="repeat" description="ANK 10">
    <location>
        <begin position="401"/>
        <end position="434"/>
    </location>
</feature>
<feature type="repeat" description="ANK 11">
    <location>
        <begin position="438"/>
        <end position="470"/>
    </location>
</feature>
<feature type="repeat" description="ANK 12">
    <location>
        <begin position="475"/>
        <end position="514"/>
    </location>
</feature>
<feature type="repeat" description="ANK 13">
    <location>
        <begin position="518"/>
        <end position="550"/>
    </location>
</feature>
<feature type="repeat" description="ANK 14">
    <location>
        <begin position="554"/>
        <end position="587"/>
    </location>
</feature>
<reference key="1">
    <citation type="journal article" date="2004" name="Science">
        <title>The 1.2-megabase genome sequence of Mimivirus.</title>
        <authorList>
            <person name="Raoult D."/>
            <person name="Audic S."/>
            <person name="Robert C."/>
            <person name="Abergel C."/>
            <person name="Renesto P."/>
            <person name="Ogata H."/>
            <person name="La Scola B."/>
            <person name="Susan M."/>
            <person name="Claverie J.-M."/>
        </authorList>
    </citation>
    <scope>NUCLEOTIDE SEQUENCE [LARGE SCALE GENOMIC DNA]</scope>
    <source>
        <strain>Rowbotham-Bradford</strain>
    </source>
</reference>
<sequence>MDLGEIEKDFTKIDEYFFDACNIKSYNYNGTYYCCKNISSTHFTKLMYLIINEKNSTNGHQKIIKYLKKKINVKNPSRINRQNDEGWTALMIASITCGQWCSIETVRLLLEHGANPNIQEKNGLQLSGIKSQLAHIISLICKTMRQKNSNPENGFTALSLACAVLDTGESVEVVELLLKYGTNVDSINHNGETALIITCQNSKYFHSIFVIDLLLQNNANTLHKDNNGFTALIHAVSHCPLNIVKLLVKNGSDVNATDNEGKSVLMHSTKNSIDIVKYLLKKGAEINHKNNNDINVLFFASKNHVKSDVIMFLLAKCSNPNEINTNKNAVLAHVCRQFNHHKNDIDTVKILLENRANPNIIDDDSRTILMDICTDYQNENSLDIIEMLLKKGANVNATDIEGRTALNYACMSINNKITIKIIKLLLKYNINVNHVDNDGAHILIDLCRNYSRYSLKVVKLLLEHGADVNITFGNKKWTPLFFANENLFSSSEKDPERCTKLIDLLIHYGANVNAVGKYGNNILMEDTTRNLECPNSITKHLLEKKINVNHQNDNGDTSLLLVYERHELERAYSIAQFLLEHGCNPNIINKNEHNILTILNNDIFWNFEKVIPHFKLFLNYNFNPNIYQIYGCHFILINVLLI</sequence>
<gene>
    <name type="ordered locus">MIMI_L91</name>
</gene>
<keyword id="KW-0040">ANK repeat</keyword>
<keyword id="KW-1185">Reference proteome</keyword>
<keyword id="KW-0677">Repeat</keyword>
<accession>Q5UPG7</accession>